<proteinExistence type="evidence at protein level"/>
<evidence type="ECO:0000250" key="1">
    <source>
        <dbReference type="UniProtKB" id="O75003"/>
    </source>
</evidence>
<evidence type="ECO:0000256" key="2">
    <source>
        <dbReference type="SAM" id="MobiDB-lite"/>
    </source>
</evidence>
<evidence type="ECO:0000269" key="3">
    <source>
    </source>
</evidence>
<evidence type="ECO:0000303" key="4">
    <source>
    </source>
</evidence>
<evidence type="ECO:0000305" key="5"/>
<evidence type="ECO:0000312" key="6">
    <source>
        <dbReference type="EMBL" id="AAF22230.1"/>
    </source>
</evidence>
<name>TREPH_PLESA</name>
<feature type="propeptide" id="PRO_0000405297" evidence="1">
    <location>
        <begin position="1"/>
        <end position="26"/>
    </location>
</feature>
<feature type="chain" id="PRO_0000405298" description="Trehalose phosphorylase" evidence="1">
    <location>
        <begin position="27"/>
        <end position="751"/>
    </location>
</feature>
<feature type="region of interest" description="Disordered" evidence="2">
    <location>
        <begin position="1"/>
        <end position="28"/>
    </location>
</feature>
<dbReference type="EC" id="2.4.1.231"/>
<dbReference type="EMBL" id="AF149777">
    <property type="protein sequence ID" value="AAF22230.1"/>
    <property type="molecule type" value="mRNA"/>
</dbReference>
<dbReference type="SMR" id="Q9UV63"/>
<dbReference type="CAZy" id="GT4">
    <property type="family name" value="Glycosyltransferase Family 4"/>
</dbReference>
<dbReference type="BioCyc" id="MetaCyc:MONOMER-5944"/>
<dbReference type="BRENDA" id="2.4.1.231">
    <property type="organism ID" value="4915"/>
</dbReference>
<dbReference type="SABIO-RK" id="Q9UV63"/>
<dbReference type="GO" id="GO:0033832">
    <property type="term" value="F:alpha,alpha-trehalose phosphorylase (configuration-retaining) activity"/>
    <property type="evidence" value="ECO:0000314"/>
    <property type="project" value="UniProtKB"/>
</dbReference>
<dbReference type="GO" id="GO:0051156">
    <property type="term" value="P:glucose 6-phosphate metabolic process"/>
    <property type="evidence" value="ECO:0000314"/>
    <property type="project" value="UniProtKB"/>
</dbReference>
<dbReference type="GO" id="GO:0006006">
    <property type="term" value="P:glucose metabolic process"/>
    <property type="evidence" value="ECO:0000314"/>
    <property type="project" value="UniProtKB"/>
</dbReference>
<dbReference type="GO" id="GO:0005991">
    <property type="term" value="P:trehalose metabolic process"/>
    <property type="evidence" value="ECO:0000314"/>
    <property type="project" value="UniProtKB"/>
</dbReference>
<dbReference type="CDD" id="cd03792">
    <property type="entry name" value="GT4_trehalose_phosphorylase"/>
    <property type="match status" value="1"/>
</dbReference>
<dbReference type="FunFam" id="3.40.50.2000:FF:000249">
    <property type="entry name" value="Trehalose phosphorylase"/>
    <property type="match status" value="1"/>
</dbReference>
<dbReference type="FunFam" id="3.40.50.2000:FF:000475">
    <property type="entry name" value="Trehalose phosphorylase"/>
    <property type="match status" value="1"/>
</dbReference>
<dbReference type="Gene3D" id="3.40.50.2000">
    <property type="entry name" value="Glycogen Phosphorylase B"/>
    <property type="match status" value="2"/>
</dbReference>
<dbReference type="InterPro" id="IPR001296">
    <property type="entry name" value="Glyco_trans_1"/>
</dbReference>
<dbReference type="InterPro" id="IPR052078">
    <property type="entry name" value="Trehalose_Metab_GTase"/>
</dbReference>
<dbReference type="InterPro" id="IPR049438">
    <property type="entry name" value="TreT_GT1"/>
</dbReference>
<dbReference type="PANTHER" id="PTHR47779">
    <property type="entry name" value="SYNTHASE (CCG-9), PUTATIVE (AFU_ORTHOLOGUE AFUA_3G12100)-RELATED"/>
    <property type="match status" value="1"/>
</dbReference>
<dbReference type="PANTHER" id="PTHR47779:SF1">
    <property type="entry name" value="SYNTHASE (CCG-9), PUTATIVE (AFU_ORTHOLOGUE AFUA_3G12100)-RELATED"/>
    <property type="match status" value="1"/>
</dbReference>
<dbReference type="Pfam" id="PF00534">
    <property type="entry name" value="Glycos_transf_1"/>
    <property type="match status" value="1"/>
</dbReference>
<dbReference type="Pfam" id="PF21269">
    <property type="entry name" value="TreT_GT1"/>
    <property type="match status" value="1"/>
</dbReference>
<dbReference type="SUPFAM" id="SSF53756">
    <property type="entry name" value="UDP-Glycosyltransferase/glycogen phosphorylase"/>
    <property type="match status" value="1"/>
</dbReference>
<keyword id="KW-0119">Carbohydrate metabolism</keyword>
<keyword id="KW-0313">Glucose metabolism</keyword>
<keyword id="KW-0328">Glycosyltransferase</keyword>
<keyword id="KW-0808">Transferase</keyword>
<organism>
    <name type="scientific">Pleurotus sajor-caju</name>
    <name type="common">Oyster mushroom</name>
    <dbReference type="NCBI Taxonomy" id="50053"/>
    <lineage>
        <taxon>Eukaryota</taxon>
        <taxon>Fungi</taxon>
        <taxon>Dikarya</taxon>
        <taxon>Basidiomycota</taxon>
        <taxon>Agaricomycotina</taxon>
        <taxon>Agaricomycetes</taxon>
        <taxon>Polyporales</taxon>
        <taxon>Polyporaceae</taxon>
        <taxon>Lentinus</taxon>
    </lineage>
</organism>
<sequence length="751" mass="83653">MSTPHHQFESKSSTAIRRRLSSSVSSKQRPNIMTTTFASLTPMWAGVAGTLVNNNTQYEIAVTVHDGVYSTDFASVIIPVTPGDTVKNSKDIEAQVLNLIRKFSAEHLCKFLGAGITLALLKECPNLCTRLWLDMDIVPIVFNIKPFHTDSVTRPNIKHRISSTTGSYVPSGSETPTVYVEASHLGDPSHLSPNAAQKLPIPRTLDEQSDSAARKCLMYFGPNNNPRLSIGARNPVTVDAGGKIHLIDDLEEYRMTVGAGTWNAVIKLADELREKKVKIGFFSSTPQGGGVALMRHALIRFLTALDVDVAWYVPNPSPQVFRTTKNNHNILQGVAAPDLRLTQEAKDAFDAWILKNGLRWTAEGGPLAPGGVDVVFIDDPQMPGLIPLIKKVRPEVPIVYRSHIEIRNDLVHVAWSPQEEVWKYLWNNIQLADLFISHPVSKFVPSDVPTEKLALLGAATDWLDGLNKDLDPWDSPFYMGEFRPRGSHLNRGEFRSLCAKEKMHELNWPARDYIVQVARFDPSKGIPNVVDSYYKFRNLLRTRSPDMDESEHPQLLICGHGAVDDPDASIIYDQIMALVNSDPYKEYAHDIVVMRLPPSDELLNAMMANSRIALQLSTREGFEVKVSEALHTGKPVIACRTGGIPLQIQHGKSGYLTTPGEKDAVAGHFYDFYTDEALYRKMSDFARTHVSNEVGTVGNAAAWLYLAVMYSRGEKIKPNGAWINDFFREETGEPYKEGETKLPRTKLDMQG</sequence>
<reference evidence="5 6" key="1">
    <citation type="journal article" date="2003" name="Protein Expr. Purif.">
        <title>Cloning and characterization of a gene encoding trehalose phosphorylase (TP) from Pleurotus sajor-caju.</title>
        <authorList>
            <person name="Han S.E."/>
            <person name="Kwon H.B."/>
            <person name="Lee S.B."/>
            <person name="Yi B.Y."/>
            <person name="Murayama I."/>
            <person name="Kitamoto Y."/>
            <person name="Byun M.O."/>
        </authorList>
    </citation>
    <scope>NUCLEOTIDE SEQUENCE [MRNA]</scope>
    <scope>FUNCTION</scope>
    <scope>CATALYTIC ACTIVITY</scope>
    <scope>BIOPHYSICOCHEMICAL PROPERTIES</scope>
    <scope>TISSUE SPECIFICITY</scope>
    <scope>INDUCTION</scope>
    <source>
        <strain evidence="6">ASI2070</strain>
        <tissue evidence="6">Mycelium</tissue>
    </source>
</reference>
<gene>
    <name evidence="4" type="primary">TP</name>
</gene>
<comment type="function">
    <text evidence="1 3">Reversibly catalyzes the synthesis and degradation of trehalose from glucose and alpha-D-glucose 1-phosphate. The equilibrium lies in the direction of trehalose synthesis.</text>
</comment>
<comment type="catalytic activity">
    <reaction evidence="3">
        <text>alpha,alpha-trehalose + phosphate = alpha-D-glucose + alpha-D-glucose 1-phosphate</text>
        <dbReference type="Rhea" id="RHEA:16257"/>
        <dbReference type="ChEBI" id="CHEBI:16551"/>
        <dbReference type="ChEBI" id="CHEBI:17925"/>
        <dbReference type="ChEBI" id="CHEBI:43474"/>
        <dbReference type="ChEBI" id="CHEBI:58601"/>
        <dbReference type="EC" id="2.4.1.231"/>
    </reaction>
</comment>
<comment type="biophysicochemical properties">
    <kinetics>
        <KM evidence="3">74.8 mM for trehalose (at pH 7.0)</KM>
        <KM evidence="3">5.4 mM for phosphate (at pH 7.0)</KM>
        <KM evidence="3">34.3 mM for glucose (at pH 6.3)</KM>
        <KM evidence="3">44.6 mM for alpha-D-glucose 1-phosphate (at pH 6.3)</KM>
    </kinetics>
    <phDependence>
        <text evidence="3">Optimum pH for phosphorolysis of trehalose is 6.7. Stable between pH 6.0 and 7.0.</text>
    </phDependence>
    <temperatureDependence>
        <text evidence="3">Optimum temperature for phosphorolysis of trehalose is 36 degrees Celsius. Stable below 30 degrees Celsius, activity decreases to 58% of maximum after 3 minutes incubation at 40 degrees Celsius.</text>
    </temperatureDependence>
</comment>
<comment type="subunit">
    <text evidence="1">Homodimer.</text>
</comment>
<comment type="tissue specificity">
    <text evidence="3">Expressed in mycelia, stipes and pilei.</text>
</comment>
<comment type="induction">
    <text evidence="3">By heat stress, cold stress and salt stress.</text>
</comment>
<comment type="similarity">
    <text evidence="5">Belongs to the glycosyltransferase group 1 family. Glycosyltransferase 4 subfamily.</text>
</comment>
<protein>
    <recommendedName>
        <fullName evidence="6">Trehalose phosphorylase</fullName>
        <ecNumber>2.4.1.231</ecNumber>
    </recommendedName>
    <alternativeName>
        <fullName evidence="1">Trehalose synthase</fullName>
        <shortName evidence="1">TSase</shortName>
    </alternativeName>
</protein>
<accession>Q9UV63</accession>